<proteinExistence type="inferred from homology"/>
<name>MIAB_MOOTA</name>
<sequence>MVKARKTFKIITYGCQMNQRDSEMMADLLQDAGYEPVAREEEAGVIILDTCCVREKAENKVYGKLGQIEKLKSANPDLVIAVAGCMVQQPGVAEKIRQQAPYVDLLLGTGNLQELPQLIEEIKAMHRPRIVVGEQEGPVVEDLPRRRARGAQAFVTITYGCNNFCTYCIVPYVRGRERSRRPENIIKEVKELVDQGVIEVTLLGQNVNSYGRDLRDGINFAGLLERVNAVEGLKRIRYVTSHPRDFTPELVTTISRLDKVCEHVHLPVQAGSNRILELMHRGYTREHYLELVADLRRHIPGISLTTDLIVGFPGETEADFEDTLDLVARVQFDNAFTFMYSPRRGTEAATMPGQLPTAIKKERLKRLMELQNSISLAKNEALVGQEVEVLVEGPSKTDPDQLSGRTRTNKLIIFPGDQSLTGRLVRVRLTRAQTWLLKGEMVDG</sequence>
<accession>Q2RJG3</accession>
<comment type="function">
    <text evidence="1">Catalyzes the methylthiolation of N6-(dimethylallyl)adenosine (i(6)A), leading to the formation of 2-methylthio-N6-(dimethylallyl)adenosine (ms(2)i(6)A) at position 37 in tRNAs that read codons beginning with uridine.</text>
</comment>
<comment type="catalytic activity">
    <reaction evidence="1">
        <text>N(6)-dimethylallyladenosine(37) in tRNA + (sulfur carrier)-SH + AH2 + 2 S-adenosyl-L-methionine = 2-methylsulfanyl-N(6)-dimethylallyladenosine(37) in tRNA + (sulfur carrier)-H + 5'-deoxyadenosine + L-methionine + A + S-adenosyl-L-homocysteine + 2 H(+)</text>
        <dbReference type="Rhea" id="RHEA:37067"/>
        <dbReference type="Rhea" id="RHEA-COMP:10375"/>
        <dbReference type="Rhea" id="RHEA-COMP:10376"/>
        <dbReference type="Rhea" id="RHEA-COMP:14737"/>
        <dbReference type="Rhea" id="RHEA-COMP:14739"/>
        <dbReference type="ChEBI" id="CHEBI:13193"/>
        <dbReference type="ChEBI" id="CHEBI:15378"/>
        <dbReference type="ChEBI" id="CHEBI:17319"/>
        <dbReference type="ChEBI" id="CHEBI:17499"/>
        <dbReference type="ChEBI" id="CHEBI:29917"/>
        <dbReference type="ChEBI" id="CHEBI:57844"/>
        <dbReference type="ChEBI" id="CHEBI:57856"/>
        <dbReference type="ChEBI" id="CHEBI:59789"/>
        <dbReference type="ChEBI" id="CHEBI:64428"/>
        <dbReference type="ChEBI" id="CHEBI:74415"/>
        <dbReference type="ChEBI" id="CHEBI:74417"/>
        <dbReference type="EC" id="2.8.4.3"/>
    </reaction>
</comment>
<comment type="cofactor">
    <cofactor evidence="1">
        <name>[4Fe-4S] cluster</name>
        <dbReference type="ChEBI" id="CHEBI:49883"/>
    </cofactor>
    <text evidence="1">Binds 2 [4Fe-4S] clusters. One cluster is coordinated with 3 cysteines and an exchangeable S-adenosyl-L-methionine.</text>
</comment>
<comment type="subunit">
    <text evidence="1">Monomer.</text>
</comment>
<comment type="subcellular location">
    <subcellularLocation>
        <location evidence="1">Cytoplasm</location>
    </subcellularLocation>
</comment>
<comment type="similarity">
    <text evidence="1">Belongs to the methylthiotransferase family. MiaB subfamily.</text>
</comment>
<keyword id="KW-0004">4Fe-4S</keyword>
<keyword id="KW-0963">Cytoplasm</keyword>
<keyword id="KW-0408">Iron</keyword>
<keyword id="KW-0411">Iron-sulfur</keyword>
<keyword id="KW-0479">Metal-binding</keyword>
<keyword id="KW-0949">S-adenosyl-L-methionine</keyword>
<keyword id="KW-0808">Transferase</keyword>
<keyword id="KW-0819">tRNA processing</keyword>
<organism>
    <name type="scientific">Moorella thermoacetica (strain ATCC 39073 / JCM 9320)</name>
    <dbReference type="NCBI Taxonomy" id="264732"/>
    <lineage>
        <taxon>Bacteria</taxon>
        <taxon>Bacillati</taxon>
        <taxon>Bacillota</taxon>
        <taxon>Clostridia</taxon>
        <taxon>Moorellales</taxon>
        <taxon>Moorellaceae</taxon>
        <taxon>Moorella</taxon>
    </lineage>
</organism>
<dbReference type="EC" id="2.8.4.3" evidence="1"/>
<dbReference type="EMBL" id="CP000232">
    <property type="protein sequence ID" value="ABC19426.1"/>
    <property type="molecule type" value="Genomic_DNA"/>
</dbReference>
<dbReference type="RefSeq" id="YP_429969.1">
    <property type="nucleotide sequence ID" value="NC_007644.1"/>
</dbReference>
<dbReference type="SMR" id="Q2RJG3"/>
<dbReference type="STRING" id="264732.Moth_1112"/>
<dbReference type="EnsemblBacteria" id="ABC19426">
    <property type="protein sequence ID" value="ABC19426"/>
    <property type="gene ID" value="Moth_1112"/>
</dbReference>
<dbReference type="KEGG" id="mta:Moth_1112"/>
<dbReference type="PATRIC" id="fig|264732.11.peg.1193"/>
<dbReference type="eggNOG" id="COG0621">
    <property type="taxonomic scope" value="Bacteria"/>
</dbReference>
<dbReference type="HOGENOM" id="CLU_018697_2_0_9"/>
<dbReference type="OrthoDB" id="9805215at2"/>
<dbReference type="GO" id="GO:0005829">
    <property type="term" value="C:cytosol"/>
    <property type="evidence" value="ECO:0007669"/>
    <property type="project" value="TreeGrafter"/>
</dbReference>
<dbReference type="GO" id="GO:0051539">
    <property type="term" value="F:4 iron, 4 sulfur cluster binding"/>
    <property type="evidence" value="ECO:0007669"/>
    <property type="project" value="UniProtKB-UniRule"/>
</dbReference>
<dbReference type="GO" id="GO:0046872">
    <property type="term" value="F:metal ion binding"/>
    <property type="evidence" value="ECO:0007669"/>
    <property type="project" value="UniProtKB-KW"/>
</dbReference>
<dbReference type="GO" id="GO:0035597">
    <property type="term" value="F:N6-isopentenyladenosine methylthiotransferase activity"/>
    <property type="evidence" value="ECO:0007669"/>
    <property type="project" value="TreeGrafter"/>
</dbReference>
<dbReference type="CDD" id="cd01335">
    <property type="entry name" value="Radical_SAM"/>
    <property type="match status" value="1"/>
</dbReference>
<dbReference type="FunFam" id="3.40.50.12160:FF:000003">
    <property type="entry name" value="CDK5 regulatory subunit-associated protein 1"/>
    <property type="match status" value="1"/>
</dbReference>
<dbReference type="FunFam" id="3.80.30.20:FF:000001">
    <property type="entry name" value="tRNA-2-methylthio-N(6)-dimethylallyladenosine synthase 2"/>
    <property type="match status" value="1"/>
</dbReference>
<dbReference type="Gene3D" id="3.40.50.12160">
    <property type="entry name" value="Methylthiotransferase, N-terminal domain"/>
    <property type="match status" value="1"/>
</dbReference>
<dbReference type="Gene3D" id="3.80.30.20">
    <property type="entry name" value="tm_1862 like domain"/>
    <property type="match status" value="1"/>
</dbReference>
<dbReference type="HAMAP" id="MF_01864">
    <property type="entry name" value="tRNA_metthiotr_MiaB"/>
    <property type="match status" value="1"/>
</dbReference>
<dbReference type="InterPro" id="IPR006638">
    <property type="entry name" value="Elp3/MiaA/NifB-like_rSAM"/>
</dbReference>
<dbReference type="InterPro" id="IPR005839">
    <property type="entry name" value="Methylthiotransferase"/>
</dbReference>
<dbReference type="InterPro" id="IPR020612">
    <property type="entry name" value="Methylthiotransferase_CS"/>
</dbReference>
<dbReference type="InterPro" id="IPR013848">
    <property type="entry name" value="Methylthiotransferase_N"/>
</dbReference>
<dbReference type="InterPro" id="IPR038135">
    <property type="entry name" value="Methylthiotransferase_N_sf"/>
</dbReference>
<dbReference type="InterPro" id="IPR006463">
    <property type="entry name" value="MiaB_methiolase"/>
</dbReference>
<dbReference type="InterPro" id="IPR007197">
    <property type="entry name" value="rSAM"/>
</dbReference>
<dbReference type="InterPro" id="IPR023404">
    <property type="entry name" value="rSAM_horseshoe"/>
</dbReference>
<dbReference type="InterPro" id="IPR002792">
    <property type="entry name" value="TRAM_dom"/>
</dbReference>
<dbReference type="NCBIfam" id="TIGR01574">
    <property type="entry name" value="miaB-methiolase"/>
    <property type="match status" value="1"/>
</dbReference>
<dbReference type="NCBIfam" id="TIGR00089">
    <property type="entry name" value="MiaB/RimO family radical SAM methylthiotransferase"/>
    <property type="match status" value="1"/>
</dbReference>
<dbReference type="PANTHER" id="PTHR43020">
    <property type="entry name" value="CDK5 REGULATORY SUBUNIT-ASSOCIATED PROTEIN 1"/>
    <property type="match status" value="1"/>
</dbReference>
<dbReference type="PANTHER" id="PTHR43020:SF2">
    <property type="entry name" value="MITOCHONDRIAL TRNA METHYLTHIOTRANSFERASE CDK5RAP1"/>
    <property type="match status" value="1"/>
</dbReference>
<dbReference type="Pfam" id="PF04055">
    <property type="entry name" value="Radical_SAM"/>
    <property type="match status" value="1"/>
</dbReference>
<dbReference type="Pfam" id="PF01938">
    <property type="entry name" value="TRAM"/>
    <property type="match status" value="1"/>
</dbReference>
<dbReference type="Pfam" id="PF00919">
    <property type="entry name" value="UPF0004"/>
    <property type="match status" value="1"/>
</dbReference>
<dbReference type="SFLD" id="SFLDF00273">
    <property type="entry name" value="(dimethylallyl)adenosine_tRNA"/>
    <property type="match status" value="1"/>
</dbReference>
<dbReference type="SFLD" id="SFLDG01082">
    <property type="entry name" value="B12-binding_domain_containing"/>
    <property type="match status" value="1"/>
</dbReference>
<dbReference type="SFLD" id="SFLDG01061">
    <property type="entry name" value="methylthiotransferase"/>
    <property type="match status" value="1"/>
</dbReference>
<dbReference type="SMART" id="SM00729">
    <property type="entry name" value="Elp3"/>
    <property type="match status" value="1"/>
</dbReference>
<dbReference type="SUPFAM" id="SSF102114">
    <property type="entry name" value="Radical SAM enzymes"/>
    <property type="match status" value="1"/>
</dbReference>
<dbReference type="PROSITE" id="PS51449">
    <property type="entry name" value="MTTASE_N"/>
    <property type="match status" value="1"/>
</dbReference>
<dbReference type="PROSITE" id="PS01278">
    <property type="entry name" value="MTTASE_RADICAL"/>
    <property type="match status" value="1"/>
</dbReference>
<dbReference type="PROSITE" id="PS51918">
    <property type="entry name" value="RADICAL_SAM"/>
    <property type="match status" value="1"/>
</dbReference>
<dbReference type="PROSITE" id="PS50926">
    <property type="entry name" value="TRAM"/>
    <property type="match status" value="1"/>
</dbReference>
<feature type="chain" id="PRO_0000374383" description="tRNA-2-methylthio-N(6)-dimethylallyladenosine synthase">
    <location>
        <begin position="1"/>
        <end position="444"/>
    </location>
</feature>
<feature type="domain" description="MTTase N-terminal" evidence="1">
    <location>
        <begin position="6"/>
        <end position="124"/>
    </location>
</feature>
<feature type="domain" description="Radical SAM core" evidence="2">
    <location>
        <begin position="147"/>
        <end position="377"/>
    </location>
</feature>
<feature type="domain" description="TRAM" evidence="1">
    <location>
        <begin position="380"/>
        <end position="443"/>
    </location>
</feature>
<feature type="binding site" evidence="1">
    <location>
        <position position="15"/>
    </location>
    <ligand>
        <name>[4Fe-4S] cluster</name>
        <dbReference type="ChEBI" id="CHEBI:49883"/>
        <label>1</label>
    </ligand>
</feature>
<feature type="binding site" evidence="1">
    <location>
        <position position="51"/>
    </location>
    <ligand>
        <name>[4Fe-4S] cluster</name>
        <dbReference type="ChEBI" id="CHEBI:49883"/>
        <label>1</label>
    </ligand>
</feature>
<feature type="binding site" evidence="1">
    <location>
        <position position="85"/>
    </location>
    <ligand>
        <name>[4Fe-4S] cluster</name>
        <dbReference type="ChEBI" id="CHEBI:49883"/>
        <label>1</label>
    </ligand>
</feature>
<feature type="binding site" evidence="1">
    <location>
        <position position="161"/>
    </location>
    <ligand>
        <name>[4Fe-4S] cluster</name>
        <dbReference type="ChEBI" id="CHEBI:49883"/>
        <label>2</label>
        <note>4Fe-4S-S-AdoMet</note>
    </ligand>
</feature>
<feature type="binding site" evidence="1">
    <location>
        <position position="165"/>
    </location>
    <ligand>
        <name>[4Fe-4S] cluster</name>
        <dbReference type="ChEBI" id="CHEBI:49883"/>
        <label>2</label>
        <note>4Fe-4S-S-AdoMet</note>
    </ligand>
</feature>
<feature type="binding site" evidence="1">
    <location>
        <position position="168"/>
    </location>
    <ligand>
        <name>[4Fe-4S] cluster</name>
        <dbReference type="ChEBI" id="CHEBI:49883"/>
        <label>2</label>
        <note>4Fe-4S-S-AdoMet</note>
    </ligand>
</feature>
<gene>
    <name evidence="1" type="primary">miaB</name>
    <name type="ordered locus">Moth_1112</name>
</gene>
<evidence type="ECO:0000255" key="1">
    <source>
        <dbReference type="HAMAP-Rule" id="MF_01864"/>
    </source>
</evidence>
<evidence type="ECO:0000255" key="2">
    <source>
        <dbReference type="PROSITE-ProRule" id="PRU01266"/>
    </source>
</evidence>
<reference key="1">
    <citation type="journal article" date="2008" name="Environ. Microbiol.">
        <title>The complete genome sequence of Moorella thermoacetica (f. Clostridium thermoaceticum).</title>
        <authorList>
            <person name="Pierce E."/>
            <person name="Xie G."/>
            <person name="Barabote R.D."/>
            <person name="Saunders E."/>
            <person name="Han C.S."/>
            <person name="Detter J.C."/>
            <person name="Richardson P."/>
            <person name="Brettin T.S."/>
            <person name="Das A."/>
            <person name="Ljungdahl L.G."/>
            <person name="Ragsdale S.W."/>
        </authorList>
    </citation>
    <scope>NUCLEOTIDE SEQUENCE [LARGE SCALE GENOMIC DNA]</scope>
    <source>
        <strain>ATCC 39073 / JCM 9320</strain>
    </source>
</reference>
<protein>
    <recommendedName>
        <fullName evidence="1">tRNA-2-methylthio-N(6)-dimethylallyladenosine synthase</fullName>
        <ecNumber evidence="1">2.8.4.3</ecNumber>
    </recommendedName>
    <alternativeName>
        <fullName evidence="1">(Dimethylallyl)adenosine tRNA methylthiotransferase MiaB</fullName>
    </alternativeName>
    <alternativeName>
        <fullName evidence="1">tRNA-i(6)A37 methylthiotransferase</fullName>
    </alternativeName>
</protein>